<evidence type="ECO:0000255" key="1">
    <source>
        <dbReference type="HAMAP-Rule" id="MF_00059"/>
    </source>
</evidence>
<reference key="1">
    <citation type="journal article" date="2009" name="BMC Genomics">
        <title>Metabolic analysis of the soil microbe Dechloromonas aromatica str. RCB: indications of a surprisingly complex life-style and cryptic anaerobic pathways for aromatic degradation.</title>
        <authorList>
            <person name="Salinero K.K."/>
            <person name="Keller K."/>
            <person name="Feil W.S."/>
            <person name="Feil H."/>
            <person name="Trong S."/>
            <person name="Di Bartolo G."/>
            <person name="Lapidus A."/>
        </authorList>
    </citation>
    <scope>NUCLEOTIDE SEQUENCE [LARGE SCALE GENOMIC DNA]</scope>
    <source>
        <strain>RCB</strain>
    </source>
</reference>
<sequence length="324" mass="35384">MQSSGLLKPRIIDVQSVSPVQAKVVMEPFERGYGHTLGNALRRILLSSMVGYAPTEVGIDGVLHEYSTVDGVQEDVVDILLNLKGVVFKLHNRDVVNLKLVKEGEGAVRAGDIELPHDVEIINPEHVIAHLSPGGKLAMEIKVEKGRGYVPGNVRNLGDAKTIGKLVLDASFSPIRRVAYAVESARVEQRTDLDKLIVDIETNGVVEPEEAIRYAARVLMEQLSVFADLEGTAPVAEASKPAQVDPVLLRPVDDLELTVRSANCLKAENIYYIGDLIQRTENELLKTPNLGRKSLNEIKEVLAARGLTLGMKLENWPPAGLEKA</sequence>
<gene>
    <name evidence="1" type="primary">rpoA</name>
    <name type="ordered locus">Daro_0345</name>
</gene>
<accession>Q47J77</accession>
<comment type="function">
    <text evidence="1">DNA-dependent RNA polymerase catalyzes the transcription of DNA into RNA using the four ribonucleoside triphosphates as substrates.</text>
</comment>
<comment type="catalytic activity">
    <reaction evidence="1">
        <text>RNA(n) + a ribonucleoside 5'-triphosphate = RNA(n+1) + diphosphate</text>
        <dbReference type="Rhea" id="RHEA:21248"/>
        <dbReference type="Rhea" id="RHEA-COMP:14527"/>
        <dbReference type="Rhea" id="RHEA-COMP:17342"/>
        <dbReference type="ChEBI" id="CHEBI:33019"/>
        <dbReference type="ChEBI" id="CHEBI:61557"/>
        <dbReference type="ChEBI" id="CHEBI:140395"/>
        <dbReference type="EC" id="2.7.7.6"/>
    </reaction>
</comment>
<comment type="subunit">
    <text evidence="1">Homodimer. The RNAP catalytic core consists of 2 alpha, 1 beta, 1 beta' and 1 omega subunit. When a sigma factor is associated with the core the holoenzyme is formed, which can initiate transcription.</text>
</comment>
<comment type="domain">
    <text evidence="1">The N-terminal domain is essential for RNAP assembly and basal transcription, whereas the C-terminal domain is involved in interaction with transcriptional regulators and with upstream promoter elements.</text>
</comment>
<comment type="similarity">
    <text evidence="1">Belongs to the RNA polymerase alpha chain family.</text>
</comment>
<feature type="chain" id="PRO_0000225269" description="DNA-directed RNA polymerase subunit alpha">
    <location>
        <begin position="1"/>
        <end position="324"/>
    </location>
</feature>
<feature type="region of interest" description="Alpha N-terminal domain (alpha-NTD)" evidence="1">
    <location>
        <begin position="1"/>
        <end position="230"/>
    </location>
</feature>
<feature type="region of interest" description="Alpha C-terminal domain (alpha-CTD)" evidence="1">
    <location>
        <begin position="244"/>
        <end position="324"/>
    </location>
</feature>
<proteinExistence type="inferred from homology"/>
<name>RPOA_DECAR</name>
<dbReference type="EC" id="2.7.7.6" evidence="1"/>
<dbReference type="EMBL" id="CP000089">
    <property type="protein sequence ID" value="AAZ45104.1"/>
    <property type="molecule type" value="Genomic_DNA"/>
</dbReference>
<dbReference type="SMR" id="Q47J77"/>
<dbReference type="STRING" id="159087.Daro_0345"/>
<dbReference type="KEGG" id="dar:Daro_0345"/>
<dbReference type="eggNOG" id="COG0202">
    <property type="taxonomic scope" value="Bacteria"/>
</dbReference>
<dbReference type="HOGENOM" id="CLU_053084_0_0_4"/>
<dbReference type="OrthoDB" id="9805706at2"/>
<dbReference type="GO" id="GO:0005737">
    <property type="term" value="C:cytoplasm"/>
    <property type="evidence" value="ECO:0007669"/>
    <property type="project" value="UniProtKB-ARBA"/>
</dbReference>
<dbReference type="GO" id="GO:0000428">
    <property type="term" value="C:DNA-directed RNA polymerase complex"/>
    <property type="evidence" value="ECO:0007669"/>
    <property type="project" value="UniProtKB-KW"/>
</dbReference>
<dbReference type="GO" id="GO:0003677">
    <property type="term" value="F:DNA binding"/>
    <property type="evidence" value="ECO:0007669"/>
    <property type="project" value="UniProtKB-UniRule"/>
</dbReference>
<dbReference type="GO" id="GO:0003899">
    <property type="term" value="F:DNA-directed RNA polymerase activity"/>
    <property type="evidence" value="ECO:0007669"/>
    <property type="project" value="UniProtKB-UniRule"/>
</dbReference>
<dbReference type="GO" id="GO:0046983">
    <property type="term" value="F:protein dimerization activity"/>
    <property type="evidence" value="ECO:0007669"/>
    <property type="project" value="InterPro"/>
</dbReference>
<dbReference type="GO" id="GO:0006351">
    <property type="term" value="P:DNA-templated transcription"/>
    <property type="evidence" value="ECO:0007669"/>
    <property type="project" value="UniProtKB-UniRule"/>
</dbReference>
<dbReference type="CDD" id="cd06928">
    <property type="entry name" value="RNAP_alpha_NTD"/>
    <property type="match status" value="1"/>
</dbReference>
<dbReference type="FunFam" id="1.10.150.20:FF:000001">
    <property type="entry name" value="DNA-directed RNA polymerase subunit alpha"/>
    <property type="match status" value="1"/>
</dbReference>
<dbReference type="FunFam" id="2.170.120.12:FF:000001">
    <property type="entry name" value="DNA-directed RNA polymerase subunit alpha"/>
    <property type="match status" value="1"/>
</dbReference>
<dbReference type="Gene3D" id="1.10.150.20">
    <property type="entry name" value="5' to 3' exonuclease, C-terminal subdomain"/>
    <property type="match status" value="1"/>
</dbReference>
<dbReference type="Gene3D" id="2.170.120.12">
    <property type="entry name" value="DNA-directed RNA polymerase, insert domain"/>
    <property type="match status" value="1"/>
</dbReference>
<dbReference type="Gene3D" id="3.30.1360.10">
    <property type="entry name" value="RNA polymerase, RBP11-like subunit"/>
    <property type="match status" value="1"/>
</dbReference>
<dbReference type="HAMAP" id="MF_00059">
    <property type="entry name" value="RNApol_bact_RpoA"/>
    <property type="match status" value="1"/>
</dbReference>
<dbReference type="InterPro" id="IPR011262">
    <property type="entry name" value="DNA-dir_RNA_pol_insert"/>
</dbReference>
<dbReference type="InterPro" id="IPR011263">
    <property type="entry name" value="DNA-dir_RNA_pol_RpoA/D/Rpb3"/>
</dbReference>
<dbReference type="InterPro" id="IPR011773">
    <property type="entry name" value="DNA-dir_RpoA"/>
</dbReference>
<dbReference type="InterPro" id="IPR036603">
    <property type="entry name" value="RBP11-like"/>
</dbReference>
<dbReference type="InterPro" id="IPR011260">
    <property type="entry name" value="RNAP_asu_C"/>
</dbReference>
<dbReference type="InterPro" id="IPR036643">
    <property type="entry name" value="RNApol_insert_sf"/>
</dbReference>
<dbReference type="NCBIfam" id="NF003513">
    <property type="entry name" value="PRK05182.1-2"/>
    <property type="match status" value="1"/>
</dbReference>
<dbReference type="NCBIfam" id="NF003519">
    <property type="entry name" value="PRK05182.2-5"/>
    <property type="match status" value="1"/>
</dbReference>
<dbReference type="NCBIfam" id="TIGR02027">
    <property type="entry name" value="rpoA"/>
    <property type="match status" value="1"/>
</dbReference>
<dbReference type="Pfam" id="PF01000">
    <property type="entry name" value="RNA_pol_A_bac"/>
    <property type="match status" value="1"/>
</dbReference>
<dbReference type="Pfam" id="PF03118">
    <property type="entry name" value="RNA_pol_A_CTD"/>
    <property type="match status" value="1"/>
</dbReference>
<dbReference type="Pfam" id="PF01193">
    <property type="entry name" value="RNA_pol_L"/>
    <property type="match status" value="1"/>
</dbReference>
<dbReference type="SMART" id="SM00662">
    <property type="entry name" value="RPOLD"/>
    <property type="match status" value="1"/>
</dbReference>
<dbReference type="SUPFAM" id="SSF47789">
    <property type="entry name" value="C-terminal domain of RNA polymerase alpha subunit"/>
    <property type="match status" value="1"/>
</dbReference>
<dbReference type="SUPFAM" id="SSF56553">
    <property type="entry name" value="Insert subdomain of RNA polymerase alpha subunit"/>
    <property type="match status" value="1"/>
</dbReference>
<dbReference type="SUPFAM" id="SSF55257">
    <property type="entry name" value="RBP11-like subunits of RNA polymerase"/>
    <property type="match status" value="1"/>
</dbReference>
<protein>
    <recommendedName>
        <fullName evidence="1">DNA-directed RNA polymerase subunit alpha</fullName>
        <shortName evidence="1">RNAP subunit alpha</shortName>
        <ecNumber evidence="1">2.7.7.6</ecNumber>
    </recommendedName>
    <alternativeName>
        <fullName evidence="1">RNA polymerase subunit alpha</fullName>
    </alternativeName>
    <alternativeName>
        <fullName evidence="1">Transcriptase subunit alpha</fullName>
    </alternativeName>
</protein>
<keyword id="KW-0240">DNA-directed RNA polymerase</keyword>
<keyword id="KW-0548">Nucleotidyltransferase</keyword>
<keyword id="KW-0804">Transcription</keyword>
<keyword id="KW-0808">Transferase</keyword>
<organism>
    <name type="scientific">Dechloromonas aromatica (strain RCB)</name>
    <dbReference type="NCBI Taxonomy" id="159087"/>
    <lineage>
        <taxon>Bacteria</taxon>
        <taxon>Pseudomonadati</taxon>
        <taxon>Pseudomonadota</taxon>
        <taxon>Betaproteobacteria</taxon>
        <taxon>Rhodocyclales</taxon>
        <taxon>Azonexaceae</taxon>
        <taxon>Dechloromonas</taxon>
    </lineage>
</organism>